<comment type="function">
    <text evidence="1">Component of the ribosome, a large ribonucleoprotein complex responsible for the synthesis of proteins in the cell. The small ribosomal subunit (SSU) binds messenger RNAs (mRNAs) and translates the encoded message by selecting cognate aminoacyl-transfer RNA (tRNA) molecules. The large subunit (LSU) contains the ribosomal catalytic site termed the peptidyl transferase center (PTC), which catalyzes the formation of peptide bonds, thereby polymerizing the amino acids delivered by tRNAs into a polypeptide chain. The nascent polypeptides leave the ribosome through a tunnel in the LSU and interact with protein factors that function in enzymatic processing, targeting, and the membrane insertion of nascent chains at the exit of the ribosomal tunnel. uL1 forms part of the L1 stalk, a mobile element that plays a role in evacuating the exit-site tRNA.</text>
</comment>
<comment type="subunit">
    <text evidence="1 2">Component of the large ribosomal subunit (LSU). Mature N.crassa ribosomes consist of a small (40S) and a large (60S) subunit. The 40S small subunit contains 1 molecule of ribosomal RNA (18S rRNA) and at least 32 different proteins. The large 60S subunit contains 3 rRNA molecules (26S, 5.8S and 5S rRNA) and at least 42 different proteins (Probable). uL1 forms part of the L1 stalk (By similarity).</text>
</comment>
<comment type="subcellular location">
    <subcellularLocation>
        <location evidence="1">Cytoplasm</location>
    </subcellularLocation>
</comment>
<comment type="similarity">
    <text evidence="2">Belongs to the universal ribosomal protein uL1 family.</text>
</comment>
<evidence type="ECO:0000250" key="1">
    <source>
        <dbReference type="UniProtKB" id="P0CX43"/>
    </source>
</evidence>
<evidence type="ECO:0000305" key="2"/>
<gene>
    <name type="primary">crp-74</name>
    <name type="synonym">rpl10a</name>
    <name type="ORF">NCU00294</name>
</gene>
<dbReference type="EMBL" id="CM002238">
    <property type="protein sequence ID" value="EAA28529.1"/>
    <property type="molecule type" value="Genomic_DNA"/>
</dbReference>
<dbReference type="RefSeq" id="XP_957765.1">
    <property type="nucleotide sequence ID" value="XM_952672.3"/>
</dbReference>
<dbReference type="SMR" id="Q7RZS0"/>
<dbReference type="FunCoup" id="Q7RZS0">
    <property type="interactions" value="965"/>
</dbReference>
<dbReference type="STRING" id="367110.Q7RZS0"/>
<dbReference type="PaxDb" id="5141-EFNCRP00000000353"/>
<dbReference type="EnsemblFungi" id="EAA28529">
    <property type="protein sequence ID" value="EAA28529"/>
    <property type="gene ID" value="NCU00294"/>
</dbReference>
<dbReference type="GeneID" id="3873856"/>
<dbReference type="KEGG" id="ncr:NCU00294"/>
<dbReference type="VEuPathDB" id="FungiDB:NCU00294"/>
<dbReference type="HOGENOM" id="CLU_062853_3_0_1"/>
<dbReference type="InParanoid" id="Q7RZS0"/>
<dbReference type="OrthoDB" id="2449818at2759"/>
<dbReference type="Proteomes" id="UP000001805">
    <property type="component" value="Chromosome 3, Linkage Group III"/>
</dbReference>
<dbReference type="GO" id="GO:0022625">
    <property type="term" value="C:cytosolic large ribosomal subunit"/>
    <property type="evidence" value="ECO:0000318"/>
    <property type="project" value="GO_Central"/>
</dbReference>
<dbReference type="GO" id="GO:0003723">
    <property type="term" value="F:RNA binding"/>
    <property type="evidence" value="ECO:0000318"/>
    <property type="project" value="GO_Central"/>
</dbReference>
<dbReference type="GO" id="GO:0003735">
    <property type="term" value="F:structural constituent of ribosome"/>
    <property type="evidence" value="ECO:0007669"/>
    <property type="project" value="InterPro"/>
</dbReference>
<dbReference type="GO" id="GO:0006412">
    <property type="term" value="P:translation"/>
    <property type="evidence" value="ECO:0007669"/>
    <property type="project" value="InterPro"/>
</dbReference>
<dbReference type="CDD" id="cd00403">
    <property type="entry name" value="Ribosomal_L1"/>
    <property type="match status" value="1"/>
</dbReference>
<dbReference type="FunFam" id="3.30.190.20:FF:000006">
    <property type="entry name" value="Ribosomal protein"/>
    <property type="match status" value="1"/>
</dbReference>
<dbReference type="FunFam" id="3.40.50.790:FF:000002">
    <property type="entry name" value="Ribosomal protein"/>
    <property type="match status" value="1"/>
</dbReference>
<dbReference type="FunFam" id="3.30.190.20:FF:000009">
    <property type="entry name" value="Ribosomal protein L10a"/>
    <property type="match status" value="1"/>
</dbReference>
<dbReference type="Gene3D" id="3.30.190.20">
    <property type="match status" value="1"/>
</dbReference>
<dbReference type="Gene3D" id="3.40.50.790">
    <property type="match status" value="1"/>
</dbReference>
<dbReference type="InterPro" id="IPR050257">
    <property type="entry name" value="eL8/uL1-like"/>
</dbReference>
<dbReference type="InterPro" id="IPR002143">
    <property type="entry name" value="Ribosomal_uL1"/>
</dbReference>
<dbReference type="InterPro" id="IPR023674">
    <property type="entry name" value="Ribosomal_uL1-like"/>
</dbReference>
<dbReference type="InterPro" id="IPR028364">
    <property type="entry name" value="Ribosomal_uL1/biogenesis"/>
</dbReference>
<dbReference type="InterPro" id="IPR016095">
    <property type="entry name" value="Ribosomal_uL1_3-a/b-sand"/>
</dbReference>
<dbReference type="InterPro" id="IPR023673">
    <property type="entry name" value="Ribosomal_uL1_CS"/>
</dbReference>
<dbReference type="PANTHER" id="PTHR23105">
    <property type="entry name" value="RIBOSOMAL PROTEIN L7AE FAMILY MEMBER"/>
    <property type="match status" value="1"/>
</dbReference>
<dbReference type="Pfam" id="PF00687">
    <property type="entry name" value="Ribosomal_L1"/>
    <property type="match status" value="1"/>
</dbReference>
<dbReference type="PIRSF" id="PIRSF002155">
    <property type="entry name" value="Ribosomal_L1"/>
    <property type="match status" value="1"/>
</dbReference>
<dbReference type="SUPFAM" id="SSF56808">
    <property type="entry name" value="Ribosomal protein L1"/>
    <property type="match status" value="1"/>
</dbReference>
<dbReference type="PROSITE" id="PS01199">
    <property type="entry name" value="RIBOSOMAL_L1"/>
    <property type="match status" value="1"/>
</dbReference>
<feature type="chain" id="PRO_0000125839" description="Large ribosomal subunit protein uL1">
    <location>
        <begin position="1"/>
        <end position="217"/>
    </location>
</feature>
<sequence length="217" mass="24126">MSKISVAAVRQHVTDLLEYSNETKKRNFLETVELQIGLKNYDPQRDKRFSGTIRLPSIPRPNMSICILGDQHDIDRAKHGGVDAMSVDDLKKLNKNKKLIKKLARKYDAFVASEALIKQIPRLLGPGLSKAGKFPTPVSHSDDLTGKLNEVKSTIKFQLKKVLCMGVAVGNVGMTQEQLVGNIMLAINYLVSLLKKGWQNVGSLTIKATMSPPKRLY</sequence>
<organism>
    <name type="scientific">Neurospora crassa (strain ATCC 24698 / 74-OR23-1A / CBS 708.71 / DSM 1257 / FGSC 987)</name>
    <dbReference type="NCBI Taxonomy" id="367110"/>
    <lineage>
        <taxon>Eukaryota</taxon>
        <taxon>Fungi</taxon>
        <taxon>Dikarya</taxon>
        <taxon>Ascomycota</taxon>
        <taxon>Pezizomycotina</taxon>
        <taxon>Sordariomycetes</taxon>
        <taxon>Sordariomycetidae</taxon>
        <taxon>Sordariales</taxon>
        <taxon>Sordariaceae</taxon>
        <taxon>Neurospora</taxon>
    </lineage>
</organism>
<protein>
    <recommendedName>
        <fullName evidence="2">Large ribosomal subunit protein uL1</fullName>
    </recommendedName>
    <alternativeName>
        <fullName>60S ribosomal protein L10a</fullName>
    </alternativeName>
    <alternativeName>
        <fullName>Cytoplasmic ribosomal protein 74</fullName>
    </alternativeName>
</protein>
<name>RL1_NEUCR</name>
<reference key="1">
    <citation type="journal article" date="2003" name="Nature">
        <title>The genome sequence of the filamentous fungus Neurospora crassa.</title>
        <authorList>
            <person name="Galagan J.E."/>
            <person name="Calvo S.E."/>
            <person name="Borkovich K.A."/>
            <person name="Selker E.U."/>
            <person name="Read N.D."/>
            <person name="Jaffe D.B."/>
            <person name="FitzHugh W."/>
            <person name="Ma L.-J."/>
            <person name="Smirnov S."/>
            <person name="Purcell S."/>
            <person name="Rehman B."/>
            <person name="Elkins T."/>
            <person name="Engels R."/>
            <person name="Wang S."/>
            <person name="Nielsen C.B."/>
            <person name="Butler J."/>
            <person name="Endrizzi M."/>
            <person name="Qui D."/>
            <person name="Ianakiev P."/>
            <person name="Bell-Pedersen D."/>
            <person name="Nelson M.A."/>
            <person name="Werner-Washburne M."/>
            <person name="Selitrennikoff C.P."/>
            <person name="Kinsey J.A."/>
            <person name="Braun E.L."/>
            <person name="Zelter A."/>
            <person name="Schulte U."/>
            <person name="Kothe G.O."/>
            <person name="Jedd G."/>
            <person name="Mewes H.-W."/>
            <person name="Staben C."/>
            <person name="Marcotte E."/>
            <person name="Greenberg D."/>
            <person name="Roy A."/>
            <person name="Foley K."/>
            <person name="Naylor J."/>
            <person name="Stange-Thomann N."/>
            <person name="Barrett R."/>
            <person name="Gnerre S."/>
            <person name="Kamal M."/>
            <person name="Kamvysselis M."/>
            <person name="Mauceli E.W."/>
            <person name="Bielke C."/>
            <person name="Rudd S."/>
            <person name="Frishman D."/>
            <person name="Krystofova S."/>
            <person name="Rasmussen C."/>
            <person name="Metzenberg R.L."/>
            <person name="Perkins D.D."/>
            <person name="Kroken S."/>
            <person name="Cogoni C."/>
            <person name="Macino G."/>
            <person name="Catcheside D.E.A."/>
            <person name="Li W."/>
            <person name="Pratt R.J."/>
            <person name="Osmani S.A."/>
            <person name="DeSouza C.P.C."/>
            <person name="Glass N.L."/>
            <person name="Orbach M.J."/>
            <person name="Berglund J.A."/>
            <person name="Voelker R."/>
            <person name="Yarden O."/>
            <person name="Plamann M."/>
            <person name="Seiler S."/>
            <person name="Dunlap J.C."/>
            <person name="Radford A."/>
            <person name="Aramayo R."/>
            <person name="Natvig D.O."/>
            <person name="Alex L.A."/>
            <person name="Mannhaupt G."/>
            <person name="Ebbole D.J."/>
            <person name="Freitag M."/>
            <person name="Paulsen I."/>
            <person name="Sachs M.S."/>
            <person name="Lander E.S."/>
            <person name="Nusbaum C."/>
            <person name="Birren B.W."/>
        </authorList>
    </citation>
    <scope>NUCLEOTIDE SEQUENCE [LARGE SCALE GENOMIC DNA]</scope>
    <source>
        <strain>ATCC 24698 / 74-OR23-1A / CBS 708.71 / DSM 1257 / FGSC 987</strain>
    </source>
</reference>
<keyword id="KW-0963">Cytoplasm</keyword>
<keyword id="KW-1185">Reference proteome</keyword>
<keyword id="KW-0687">Ribonucleoprotein</keyword>
<keyword id="KW-0689">Ribosomal protein</keyword>
<accession>Q7RZS0</accession>
<proteinExistence type="inferred from homology"/>